<gene>
    <name evidence="1" type="primary">lepA</name>
    <name type="ordered locus">Bpet1762</name>
</gene>
<sequence length="597" mass="65745">MQHIRNFSIIAHIDHGKSTLADRLIQRCGGLAAREMSAQVLDSMEIERERGITIKAQTAALQYQAQDGKTYNLNLIDTPGHVDFSYEVSRSLSACEGALLVVDASQGVEAQTVANCYTAIELGVEVLPVLNKMDLPQADPDAARQEVEDVIGIDASNAVLASAKTGMGIDEILETIVARVPAPQGNPDGALQALIIDSWFDNYVGVVMLVRIINGVLRPKDKILLMASGATHLCEQVGVFTPKSQPRTELSAGEVGFIIAGIKELAHAKVGDTVTLAGKPANAPLPGFKEVKPQVFAGLYPVESSEYDQLRDSLEKLKLNDAALMFEPEVSQALGFGFRCGFLGLLHMEIVQERLEREFDMDIITTAPSVVYEVEQRDGSIEIVDSPARMPEVGKIADIREPIVKVTLFMPQEYVGPVMTLCNNKRGVQINMSYHGRQVHLTYEIPLAEIVLDFFDKLKSVSRGYASMDYEFLEYRSADVVRVDLLINGDRVDALAMIVHRANARYRARDVVTRMRGLIPRQMFDVAIQAAIGAEVIARENVKALRKNVLAKCYGGDITRKKKLLEKQKAGKKRMKQVGSVEIPQEAFLAILQVEDK</sequence>
<evidence type="ECO:0000255" key="1">
    <source>
        <dbReference type="HAMAP-Rule" id="MF_00071"/>
    </source>
</evidence>
<name>LEPA_BORPD</name>
<proteinExistence type="inferred from homology"/>
<comment type="function">
    <text evidence="1">Required for accurate and efficient protein synthesis under certain stress conditions. May act as a fidelity factor of the translation reaction, by catalyzing a one-codon backward translocation of tRNAs on improperly translocated ribosomes. Back-translocation proceeds from a post-translocation (POST) complex to a pre-translocation (PRE) complex, thus giving elongation factor G a second chance to translocate the tRNAs correctly. Binds to ribosomes in a GTP-dependent manner.</text>
</comment>
<comment type="catalytic activity">
    <reaction evidence="1">
        <text>GTP + H2O = GDP + phosphate + H(+)</text>
        <dbReference type="Rhea" id="RHEA:19669"/>
        <dbReference type="ChEBI" id="CHEBI:15377"/>
        <dbReference type="ChEBI" id="CHEBI:15378"/>
        <dbReference type="ChEBI" id="CHEBI:37565"/>
        <dbReference type="ChEBI" id="CHEBI:43474"/>
        <dbReference type="ChEBI" id="CHEBI:58189"/>
        <dbReference type="EC" id="3.6.5.n1"/>
    </reaction>
</comment>
<comment type="subcellular location">
    <subcellularLocation>
        <location evidence="1">Cell inner membrane</location>
        <topology evidence="1">Peripheral membrane protein</topology>
        <orientation evidence="1">Cytoplasmic side</orientation>
    </subcellularLocation>
</comment>
<comment type="similarity">
    <text evidence="1">Belongs to the TRAFAC class translation factor GTPase superfamily. Classic translation factor GTPase family. LepA subfamily.</text>
</comment>
<reference key="1">
    <citation type="journal article" date="2008" name="BMC Genomics">
        <title>The missing link: Bordetella petrii is endowed with both the metabolic versatility of environmental bacteria and virulence traits of pathogenic Bordetellae.</title>
        <authorList>
            <person name="Gross R."/>
            <person name="Guzman C.A."/>
            <person name="Sebaihia M."/>
            <person name="Martin dos Santos V.A.P."/>
            <person name="Pieper D.H."/>
            <person name="Koebnik R."/>
            <person name="Lechner M."/>
            <person name="Bartels D."/>
            <person name="Buhrmester J."/>
            <person name="Choudhuri J.V."/>
            <person name="Ebensen T."/>
            <person name="Gaigalat L."/>
            <person name="Herrmann S."/>
            <person name="Khachane A.N."/>
            <person name="Larisch C."/>
            <person name="Link S."/>
            <person name="Linke B."/>
            <person name="Meyer F."/>
            <person name="Mormann S."/>
            <person name="Nakunst D."/>
            <person name="Rueckert C."/>
            <person name="Schneiker-Bekel S."/>
            <person name="Schulze K."/>
            <person name="Voerholter F.-J."/>
            <person name="Yevsa T."/>
            <person name="Engle J.T."/>
            <person name="Goldman W.E."/>
            <person name="Puehler A."/>
            <person name="Goebel U.B."/>
            <person name="Goesmann A."/>
            <person name="Bloecker H."/>
            <person name="Kaiser O."/>
            <person name="Martinez-Arias R."/>
        </authorList>
    </citation>
    <scope>NUCLEOTIDE SEQUENCE [LARGE SCALE GENOMIC DNA]</scope>
    <source>
        <strain>ATCC BAA-461 / DSM 12804 / CCUG 43448</strain>
    </source>
</reference>
<protein>
    <recommendedName>
        <fullName evidence="1">Elongation factor 4</fullName>
        <shortName evidence="1">EF-4</shortName>
        <ecNumber evidence="1">3.6.5.n1</ecNumber>
    </recommendedName>
    <alternativeName>
        <fullName evidence="1">Ribosomal back-translocase LepA</fullName>
    </alternativeName>
</protein>
<keyword id="KW-0997">Cell inner membrane</keyword>
<keyword id="KW-1003">Cell membrane</keyword>
<keyword id="KW-0342">GTP-binding</keyword>
<keyword id="KW-0378">Hydrolase</keyword>
<keyword id="KW-0472">Membrane</keyword>
<keyword id="KW-0547">Nucleotide-binding</keyword>
<keyword id="KW-0648">Protein biosynthesis</keyword>
<feature type="chain" id="PRO_1000092374" description="Elongation factor 4">
    <location>
        <begin position="1"/>
        <end position="597"/>
    </location>
</feature>
<feature type="domain" description="tr-type G">
    <location>
        <begin position="2"/>
        <end position="184"/>
    </location>
</feature>
<feature type="binding site" evidence="1">
    <location>
        <begin position="14"/>
        <end position="19"/>
    </location>
    <ligand>
        <name>GTP</name>
        <dbReference type="ChEBI" id="CHEBI:37565"/>
    </ligand>
</feature>
<feature type="binding site" evidence="1">
    <location>
        <begin position="131"/>
        <end position="134"/>
    </location>
    <ligand>
        <name>GTP</name>
        <dbReference type="ChEBI" id="CHEBI:37565"/>
    </ligand>
</feature>
<dbReference type="EC" id="3.6.5.n1" evidence="1"/>
<dbReference type="EMBL" id="AM902716">
    <property type="protein sequence ID" value="CAP42101.1"/>
    <property type="molecule type" value="Genomic_DNA"/>
</dbReference>
<dbReference type="SMR" id="A9III9"/>
<dbReference type="STRING" id="94624.Bpet1762"/>
<dbReference type="KEGG" id="bpt:Bpet1762"/>
<dbReference type="eggNOG" id="COG0481">
    <property type="taxonomic scope" value="Bacteria"/>
</dbReference>
<dbReference type="Proteomes" id="UP000001225">
    <property type="component" value="Chromosome"/>
</dbReference>
<dbReference type="GO" id="GO:0005886">
    <property type="term" value="C:plasma membrane"/>
    <property type="evidence" value="ECO:0007669"/>
    <property type="project" value="UniProtKB-SubCell"/>
</dbReference>
<dbReference type="GO" id="GO:0005525">
    <property type="term" value="F:GTP binding"/>
    <property type="evidence" value="ECO:0007669"/>
    <property type="project" value="UniProtKB-UniRule"/>
</dbReference>
<dbReference type="GO" id="GO:0003924">
    <property type="term" value="F:GTPase activity"/>
    <property type="evidence" value="ECO:0007669"/>
    <property type="project" value="UniProtKB-UniRule"/>
</dbReference>
<dbReference type="GO" id="GO:0097216">
    <property type="term" value="F:guanosine tetraphosphate binding"/>
    <property type="evidence" value="ECO:0007669"/>
    <property type="project" value="UniProtKB-ARBA"/>
</dbReference>
<dbReference type="GO" id="GO:0043022">
    <property type="term" value="F:ribosome binding"/>
    <property type="evidence" value="ECO:0007669"/>
    <property type="project" value="UniProtKB-UniRule"/>
</dbReference>
<dbReference type="GO" id="GO:0003746">
    <property type="term" value="F:translation elongation factor activity"/>
    <property type="evidence" value="ECO:0007669"/>
    <property type="project" value="UniProtKB-UniRule"/>
</dbReference>
<dbReference type="GO" id="GO:0045727">
    <property type="term" value="P:positive regulation of translation"/>
    <property type="evidence" value="ECO:0007669"/>
    <property type="project" value="UniProtKB-UniRule"/>
</dbReference>
<dbReference type="CDD" id="cd03699">
    <property type="entry name" value="EF4_II"/>
    <property type="match status" value="1"/>
</dbReference>
<dbReference type="CDD" id="cd16260">
    <property type="entry name" value="EF4_III"/>
    <property type="match status" value="1"/>
</dbReference>
<dbReference type="CDD" id="cd01890">
    <property type="entry name" value="LepA"/>
    <property type="match status" value="1"/>
</dbReference>
<dbReference type="CDD" id="cd03709">
    <property type="entry name" value="lepA_C"/>
    <property type="match status" value="1"/>
</dbReference>
<dbReference type="FunFam" id="3.40.50.300:FF:000078">
    <property type="entry name" value="Elongation factor 4"/>
    <property type="match status" value="1"/>
</dbReference>
<dbReference type="FunFam" id="2.40.30.10:FF:000015">
    <property type="entry name" value="Translation factor GUF1, mitochondrial"/>
    <property type="match status" value="1"/>
</dbReference>
<dbReference type="FunFam" id="3.30.70.240:FF:000007">
    <property type="entry name" value="Translation factor GUF1, mitochondrial"/>
    <property type="match status" value="1"/>
</dbReference>
<dbReference type="FunFam" id="3.30.70.2570:FF:000001">
    <property type="entry name" value="Translation factor GUF1, mitochondrial"/>
    <property type="match status" value="1"/>
</dbReference>
<dbReference type="FunFam" id="3.30.70.870:FF:000004">
    <property type="entry name" value="Translation factor GUF1, mitochondrial"/>
    <property type="match status" value="1"/>
</dbReference>
<dbReference type="Gene3D" id="3.30.70.240">
    <property type="match status" value="1"/>
</dbReference>
<dbReference type="Gene3D" id="3.30.70.2570">
    <property type="entry name" value="Elongation factor 4, C-terminal domain"/>
    <property type="match status" value="1"/>
</dbReference>
<dbReference type="Gene3D" id="3.30.70.870">
    <property type="entry name" value="Elongation Factor G (Translational Gtpase), domain 3"/>
    <property type="match status" value="1"/>
</dbReference>
<dbReference type="Gene3D" id="3.40.50.300">
    <property type="entry name" value="P-loop containing nucleotide triphosphate hydrolases"/>
    <property type="match status" value="1"/>
</dbReference>
<dbReference type="Gene3D" id="2.40.30.10">
    <property type="entry name" value="Translation factors"/>
    <property type="match status" value="1"/>
</dbReference>
<dbReference type="HAMAP" id="MF_00071">
    <property type="entry name" value="LepA"/>
    <property type="match status" value="1"/>
</dbReference>
<dbReference type="InterPro" id="IPR006297">
    <property type="entry name" value="EF-4"/>
</dbReference>
<dbReference type="InterPro" id="IPR035647">
    <property type="entry name" value="EFG_III/V"/>
</dbReference>
<dbReference type="InterPro" id="IPR000640">
    <property type="entry name" value="EFG_V-like"/>
</dbReference>
<dbReference type="InterPro" id="IPR004161">
    <property type="entry name" value="EFTu-like_2"/>
</dbReference>
<dbReference type="InterPro" id="IPR031157">
    <property type="entry name" value="G_TR_CS"/>
</dbReference>
<dbReference type="InterPro" id="IPR038363">
    <property type="entry name" value="LepA_C_sf"/>
</dbReference>
<dbReference type="InterPro" id="IPR013842">
    <property type="entry name" value="LepA_CTD"/>
</dbReference>
<dbReference type="InterPro" id="IPR035654">
    <property type="entry name" value="LepA_IV"/>
</dbReference>
<dbReference type="InterPro" id="IPR027417">
    <property type="entry name" value="P-loop_NTPase"/>
</dbReference>
<dbReference type="InterPro" id="IPR005225">
    <property type="entry name" value="Small_GTP-bd"/>
</dbReference>
<dbReference type="InterPro" id="IPR000795">
    <property type="entry name" value="T_Tr_GTP-bd_dom"/>
</dbReference>
<dbReference type="InterPro" id="IPR009000">
    <property type="entry name" value="Transl_B-barrel_sf"/>
</dbReference>
<dbReference type="NCBIfam" id="TIGR01393">
    <property type="entry name" value="lepA"/>
    <property type="match status" value="1"/>
</dbReference>
<dbReference type="NCBIfam" id="TIGR00231">
    <property type="entry name" value="small_GTP"/>
    <property type="match status" value="1"/>
</dbReference>
<dbReference type="PANTHER" id="PTHR43512:SF4">
    <property type="entry name" value="TRANSLATION FACTOR GUF1 HOMOLOG, CHLOROPLASTIC"/>
    <property type="match status" value="1"/>
</dbReference>
<dbReference type="PANTHER" id="PTHR43512">
    <property type="entry name" value="TRANSLATION FACTOR GUF1-RELATED"/>
    <property type="match status" value="1"/>
</dbReference>
<dbReference type="Pfam" id="PF00679">
    <property type="entry name" value="EFG_C"/>
    <property type="match status" value="1"/>
</dbReference>
<dbReference type="Pfam" id="PF00009">
    <property type="entry name" value="GTP_EFTU"/>
    <property type="match status" value="1"/>
</dbReference>
<dbReference type="Pfam" id="PF03144">
    <property type="entry name" value="GTP_EFTU_D2"/>
    <property type="match status" value="1"/>
</dbReference>
<dbReference type="Pfam" id="PF06421">
    <property type="entry name" value="LepA_C"/>
    <property type="match status" value="1"/>
</dbReference>
<dbReference type="PRINTS" id="PR00315">
    <property type="entry name" value="ELONGATNFCT"/>
</dbReference>
<dbReference type="SMART" id="SM00838">
    <property type="entry name" value="EFG_C"/>
    <property type="match status" value="1"/>
</dbReference>
<dbReference type="SUPFAM" id="SSF54980">
    <property type="entry name" value="EF-G C-terminal domain-like"/>
    <property type="match status" value="2"/>
</dbReference>
<dbReference type="SUPFAM" id="SSF52540">
    <property type="entry name" value="P-loop containing nucleoside triphosphate hydrolases"/>
    <property type="match status" value="1"/>
</dbReference>
<dbReference type="SUPFAM" id="SSF50447">
    <property type="entry name" value="Translation proteins"/>
    <property type="match status" value="1"/>
</dbReference>
<dbReference type="PROSITE" id="PS00301">
    <property type="entry name" value="G_TR_1"/>
    <property type="match status" value="1"/>
</dbReference>
<dbReference type="PROSITE" id="PS51722">
    <property type="entry name" value="G_TR_2"/>
    <property type="match status" value="1"/>
</dbReference>
<organism>
    <name type="scientific">Bordetella petrii (strain ATCC BAA-461 / DSM 12804 / CCUG 43448)</name>
    <dbReference type="NCBI Taxonomy" id="340100"/>
    <lineage>
        <taxon>Bacteria</taxon>
        <taxon>Pseudomonadati</taxon>
        <taxon>Pseudomonadota</taxon>
        <taxon>Betaproteobacteria</taxon>
        <taxon>Burkholderiales</taxon>
        <taxon>Alcaligenaceae</taxon>
        <taxon>Bordetella</taxon>
    </lineage>
</organism>
<accession>A9III9</accession>